<evidence type="ECO:0000255" key="1"/>
<evidence type="ECO:0000269" key="2">
    <source>
    </source>
</evidence>
<evidence type="ECO:0000269" key="3">
    <source>
    </source>
</evidence>
<evidence type="ECO:0000269" key="4">
    <source>
    </source>
</evidence>
<evidence type="ECO:0000269" key="5">
    <source>
    </source>
</evidence>
<evidence type="ECO:0000269" key="6">
    <source>
    </source>
</evidence>
<evidence type="ECO:0000269" key="7">
    <source>
    </source>
</evidence>
<evidence type="ECO:0000269" key="8">
    <source>
    </source>
</evidence>
<evidence type="ECO:0000269" key="9">
    <source>
    </source>
</evidence>
<evidence type="ECO:0000269" key="10">
    <source>
    </source>
</evidence>
<evidence type="ECO:0000269" key="11">
    <source>
    </source>
</evidence>
<evidence type="ECO:0000269" key="12">
    <source>
    </source>
</evidence>
<evidence type="ECO:0000269" key="13">
    <source>
    </source>
</evidence>
<evidence type="ECO:0000269" key="14">
    <source>
    </source>
</evidence>
<evidence type="ECO:0000269" key="15">
    <source ref="2"/>
</evidence>
<evidence type="ECO:0000303" key="16">
    <source>
    </source>
</evidence>
<evidence type="ECO:0000305" key="17"/>
<reference key="1">
    <citation type="journal article" date="2004" name="Nat. Genet.">
        <title>Complete sequencing and characterization of 21,243 full-length human cDNAs.</title>
        <authorList>
            <person name="Ota T."/>
            <person name="Suzuki Y."/>
            <person name="Nishikawa T."/>
            <person name="Otsuki T."/>
            <person name="Sugiyama T."/>
            <person name="Irie R."/>
            <person name="Wakamatsu A."/>
            <person name="Hayashi K."/>
            <person name="Sato H."/>
            <person name="Nagai K."/>
            <person name="Kimura K."/>
            <person name="Makita H."/>
            <person name="Sekine M."/>
            <person name="Obayashi M."/>
            <person name="Nishi T."/>
            <person name="Shibahara T."/>
            <person name="Tanaka T."/>
            <person name="Ishii S."/>
            <person name="Yamamoto J."/>
            <person name="Saito K."/>
            <person name="Kawai Y."/>
            <person name="Isono Y."/>
            <person name="Nakamura Y."/>
            <person name="Nagahari K."/>
            <person name="Murakami K."/>
            <person name="Yasuda T."/>
            <person name="Iwayanagi T."/>
            <person name="Wagatsuma M."/>
            <person name="Shiratori A."/>
            <person name="Sudo H."/>
            <person name="Hosoiri T."/>
            <person name="Kaku Y."/>
            <person name="Kodaira H."/>
            <person name="Kondo H."/>
            <person name="Sugawara M."/>
            <person name="Takahashi M."/>
            <person name="Kanda K."/>
            <person name="Yokoi T."/>
            <person name="Furuya T."/>
            <person name="Kikkawa E."/>
            <person name="Omura Y."/>
            <person name="Abe K."/>
            <person name="Kamihara K."/>
            <person name="Katsuta N."/>
            <person name="Sato K."/>
            <person name="Tanikawa M."/>
            <person name="Yamazaki M."/>
            <person name="Ninomiya K."/>
            <person name="Ishibashi T."/>
            <person name="Yamashita H."/>
            <person name="Murakawa K."/>
            <person name="Fujimori K."/>
            <person name="Tanai H."/>
            <person name="Kimata M."/>
            <person name="Watanabe M."/>
            <person name="Hiraoka S."/>
            <person name="Chiba Y."/>
            <person name="Ishida S."/>
            <person name="Ono Y."/>
            <person name="Takiguchi S."/>
            <person name="Watanabe S."/>
            <person name="Yosida M."/>
            <person name="Hotuta T."/>
            <person name="Kusano J."/>
            <person name="Kanehori K."/>
            <person name="Takahashi-Fujii A."/>
            <person name="Hara H."/>
            <person name="Tanase T.-O."/>
            <person name="Nomura Y."/>
            <person name="Togiya S."/>
            <person name="Komai F."/>
            <person name="Hara R."/>
            <person name="Takeuchi K."/>
            <person name="Arita M."/>
            <person name="Imose N."/>
            <person name="Musashino K."/>
            <person name="Yuuki H."/>
            <person name="Oshima A."/>
            <person name="Sasaki N."/>
            <person name="Aotsuka S."/>
            <person name="Yoshikawa Y."/>
            <person name="Matsunawa H."/>
            <person name="Ichihara T."/>
            <person name="Shiohata N."/>
            <person name="Sano S."/>
            <person name="Moriya S."/>
            <person name="Momiyama H."/>
            <person name="Satoh N."/>
            <person name="Takami S."/>
            <person name="Terashima Y."/>
            <person name="Suzuki O."/>
            <person name="Nakagawa S."/>
            <person name="Senoh A."/>
            <person name="Mizoguchi H."/>
            <person name="Goto Y."/>
            <person name="Shimizu F."/>
            <person name="Wakebe H."/>
            <person name="Hishigaki H."/>
            <person name="Watanabe T."/>
            <person name="Sugiyama A."/>
            <person name="Takemoto M."/>
            <person name="Kawakami B."/>
            <person name="Yamazaki M."/>
            <person name="Watanabe K."/>
            <person name="Kumagai A."/>
            <person name="Itakura S."/>
            <person name="Fukuzumi Y."/>
            <person name="Fujimori Y."/>
            <person name="Komiyama M."/>
            <person name="Tashiro H."/>
            <person name="Tanigami A."/>
            <person name="Fujiwara T."/>
            <person name="Ono T."/>
            <person name="Yamada K."/>
            <person name="Fujii Y."/>
            <person name="Ozaki K."/>
            <person name="Hirao M."/>
            <person name="Ohmori Y."/>
            <person name="Kawabata A."/>
            <person name="Hikiji T."/>
            <person name="Kobatake N."/>
            <person name="Inagaki H."/>
            <person name="Ikema Y."/>
            <person name="Okamoto S."/>
            <person name="Okitani R."/>
            <person name="Kawakami T."/>
            <person name="Noguchi S."/>
            <person name="Itoh T."/>
            <person name="Shigeta K."/>
            <person name="Senba T."/>
            <person name="Matsumura K."/>
            <person name="Nakajima Y."/>
            <person name="Mizuno T."/>
            <person name="Morinaga M."/>
            <person name="Sasaki M."/>
            <person name="Togashi T."/>
            <person name="Oyama M."/>
            <person name="Hata H."/>
            <person name="Watanabe M."/>
            <person name="Komatsu T."/>
            <person name="Mizushima-Sugano J."/>
            <person name="Satoh T."/>
            <person name="Shirai Y."/>
            <person name="Takahashi Y."/>
            <person name="Nakagawa K."/>
            <person name="Okumura K."/>
            <person name="Nagase T."/>
            <person name="Nomura N."/>
            <person name="Kikuchi H."/>
            <person name="Masuho Y."/>
            <person name="Yamashita R."/>
            <person name="Nakai K."/>
            <person name="Yada T."/>
            <person name="Nakamura Y."/>
            <person name="Ohara O."/>
            <person name="Isogai T."/>
            <person name="Sugano S."/>
        </authorList>
    </citation>
    <scope>NUCLEOTIDE SEQUENCE [LARGE SCALE MRNA] (ISOFORMS 1 AND 2)</scope>
    <source>
        <tissue>Adrenal gland</tissue>
    </source>
</reference>
<reference key="2">
    <citation type="submission" date="2004-06" db="EMBL/GenBank/DDBJ databases">
        <title>Cloning of human full open reading frames in Gateway(TM) system entry vector (pDONR201).</title>
        <authorList>
            <person name="Ebert L."/>
            <person name="Schick M."/>
            <person name="Neubert P."/>
            <person name="Schatten R."/>
            <person name="Henze S."/>
            <person name="Korn B."/>
        </authorList>
    </citation>
    <scope>NUCLEOTIDE SEQUENCE [LARGE SCALE MRNA] (ISOFORM 1)</scope>
    <scope>VARIANT CLN6 LEU-234</scope>
</reference>
<reference key="3">
    <citation type="journal article" date="2006" name="Nature">
        <title>Analysis of the DNA sequence and duplication history of human chromosome 15.</title>
        <authorList>
            <person name="Zody M.C."/>
            <person name="Garber M."/>
            <person name="Sharpe T."/>
            <person name="Young S.K."/>
            <person name="Rowen L."/>
            <person name="O'Neill K."/>
            <person name="Whittaker C.A."/>
            <person name="Kamal M."/>
            <person name="Chang J.L."/>
            <person name="Cuomo C.A."/>
            <person name="Dewar K."/>
            <person name="FitzGerald M.G."/>
            <person name="Kodira C.D."/>
            <person name="Madan A."/>
            <person name="Qin S."/>
            <person name="Yang X."/>
            <person name="Abbasi N."/>
            <person name="Abouelleil A."/>
            <person name="Arachchi H.M."/>
            <person name="Baradarani L."/>
            <person name="Birditt B."/>
            <person name="Bloom S."/>
            <person name="Bloom T."/>
            <person name="Borowsky M.L."/>
            <person name="Burke J."/>
            <person name="Butler J."/>
            <person name="Cook A."/>
            <person name="DeArellano K."/>
            <person name="DeCaprio D."/>
            <person name="Dorris L. III"/>
            <person name="Dors M."/>
            <person name="Eichler E.E."/>
            <person name="Engels R."/>
            <person name="Fahey J."/>
            <person name="Fleetwood P."/>
            <person name="Friedman C."/>
            <person name="Gearin G."/>
            <person name="Hall J.L."/>
            <person name="Hensley G."/>
            <person name="Johnson E."/>
            <person name="Jones C."/>
            <person name="Kamat A."/>
            <person name="Kaur A."/>
            <person name="Locke D.P."/>
            <person name="Madan A."/>
            <person name="Munson G."/>
            <person name="Jaffe D.B."/>
            <person name="Lui A."/>
            <person name="Macdonald P."/>
            <person name="Mauceli E."/>
            <person name="Naylor J.W."/>
            <person name="Nesbitt R."/>
            <person name="Nicol R."/>
            <person name="O'Leary S.B."/>
            <person name="Ratcliffe A."/>
            <person name="Rounsley S."/>
            <person name="She X."/>
            <person name="Sneddon K.M.B."/>
            <person name="Stewart S."/>
            <person name="Sougnez C."/>
            <person name="Stone S.M."/>
            <person name="Topham K."/>
            <person name="Vincent D."/>
            <person name="Wang S."/>
            <person name="Zimmer A.R."/>
            <person name="Birren B.W."/>
            <person name="Hood L."/>
            <person name="Lander E.S."/>
            <person name="Nusbaum C."/>
        </authorList>
    </citation>
    <scope>NUCLEOTIDE SEQUENCE [LARGE SCALE GENOMIC DNA]</scope>
</reference>
<reference key="4">
    <citation type="submission" date="2005-07" db="EMBL/GenBank/DDBJ databases">
        <authorList>
            <person name="Mural R.J."/>
            <person name="Istrail S."/>
            <person name="Sutton G.G."/>
            <person name="Florea L."/>
            <person name="Halpern A.L."/>
            <person name="Mobarry C.M."/>
            <person name="Lippert R."/>
            <person name="Walenz B."/>
            <person name="Shatkay H."/>
            <person name="Dew I."/>
            <person name="Miller J.R."/>
            <person name="Flanigan M.J."/>
            <person name="Edwards N.J."/>
            <person name="Bolanos R."/>
            <person name="Fasulo D."/>
            <person name="Halldorsson B.V."/>
            <person name="Hannenhalli S."/>
            <person name="Turner R."/>
            <person name="Yooseph S."/>
            <person name="Lu F."/>
            <person name="Nusskern D.R."/>
            <person name="Shue B.C."/>
            <person name="Zheng X.H."/>
            <person name="Zhong F."/>
            <person name="Delcher A.L."/>
            <person name="Huson D.H."/>
            <person name="Kravitz S.A."/>
            <person name="Mouchard L."/>
            <person name="Reinert K."/>
            <person name="Remington K.A."/>
            <person name="Clark A.G."/>
            <person name="Waterman M.S."/>
            <person name="Eichler E.E."/>
            <person name="Adams M.D."/>
            <person name="Hunkapiller M.W."/>
            <person name="Myers E.W."/>
            <person name="Venter J.C."/>
        </authorList>
    </citation>
    <scope>NUCLEOTIDE SEQUENCE [LARGE SCALE GENOMIC DNA]</scope>
</reference>
<reference key="5">
    <citation type="journal article" date="2004" name="Genome Res.">
        <title>The status, quality, and expansion of the NIH full-length cDNA project: the Mammalian Gene Collection (MGC).</title>
        <authorList>
            <consortium name="The MGC Project Team"/>
        </authorList>
    </citation>
    <scope>NUCLEOTIDE SEQUENCE [LARGE SCALE MRNA] (ISOFORM 1)</scope>
    <source>
        <tissue>Lung</tissue>
        <tissue>Urinary bladder</tissue>
    </source>
</reference>
<reference key="6">
    <citation type="journal article" date="2004" name="Exp. Cell Res.">
        <title>CLN6, which is associated with a lysosomal storage disease, is an endoplasmic reticulum protein.</title>
        <authorList>
            <person name="Mole S.E."/>
            <person name="Michaux G."/>
            <person name="Codlin S."/>
            <person name="Wheeler R.B."/>
            <person name="Sharp J.D."/>
            <person name="Cutler D.F."/>
        </authorList>
    </citation>
    <scope>SUBCELLULAR LOCATION</scope>
</reference>
<reference key="7">
    <citation type="journal article" date="2007" name="Pediatr. Res.">
        <title>Neuronal ceroid lipofuscinosis: a common pathway?</title>
        <authorList>
            <person name="Persaud-Sawin D.A."/>
            <person name="Mousallem T."/>
            <person name="Wang C."/>
            <person name="Zucker A."/>
            <person name="Kominami E."/>
            <person name="Boustany R.M."/>
        </authorList>
    </citation>
    <scope>INTERACTION WITH CLN3</scope>
</reference>
<reference key="8">
    <citation type="journal article" date="2009" name="BMC Cell Biol.">
        <title>Novel interactions of CLN5 support molecular networking between neuronal ceroid lipofuscinosis proteins.</title>
        <authorList>
            <person name="Lyly A."/>
            <person name="von Schantz C."/>
            <person name="Heine C."/>
            <person name="Schmiedt M.L."/>
            <person name="Sipilae T."/>
            <person name="Jalanko A."/>
            <person name="Kyttaelae A."/>
        </authorList>
    </citation>
    <scope>INTERACTION WITH CLN5</scope>
    <scope>SUBCELLULAR LOCATION</scope>
</reference>
<reference key="9">
    <citation type="journal article" date="2009" name="J. Neurosci. Res.">
        <title>Protein product of CLN6 gene responsible for variant late-onset infantile neuronal ceroid lipofuscinosis interacts with CRMP-2.</title>
        <authorList>
            <person name="Benedict J.W."/>
            <person name="Getty A.L."/>
            <person name="Wishart T.M."/>
            <person name="Gillingwater T.H."/>
            <person name="Pearce D.A."/>
        </authorList>
    </citation>
    <scope>INTERACTION WITH CRMP2</scope>
</reference>
<reference key="10">
    <citation type="journal article" date="2010" name="Exp. Cell Res.">
        <title>TRAM1 is involved in disposal of ER membrane degradation substrates.</title>
        <authorList>
            <person name="Ng C.L."/>
            <person name="Oresic K."/>
            <person name="Tortorella D."/>
        </authorList>
    </citation>
    <scope>CHARACTERIZATION OF VARIANT CLN6 THR-241</scope>
</reference>
<reference key="11">
    <citation type="journal article" date="2002" name="Am. J. Hum. Genet.">
        <title>Mutations in a novel CLN6-encoded transmembrane protein cause variant neuronal ceroid lipofuscinosis in man and mouse.</title>
        <authorList>
            <person name="Gao H."/>
            <person name="Boustany R.-M.N."/>
            <person name="Espinola J.A."/>
            <person name="Cotman S.L."/>
            <person name="Srinidhi L."/>
            <person name="Antonellis K.A."/>
            <person name="Gillis T."/>
            <person name="Qin X."/>
            <person name="Liu S."/>
            <person name="Donahue L.R."/>
            <person name="Bronson R.T."/>
            <person name="Faust J.R."/>
            <person name="Stout D."/>
            <person name="Haines J.L."/>
            <person name="Lerner T.J."/>
            <person name="MacDonald M.E."/>
        </authorList>
    </citation>
    <scope>VARIANT CLN6 TYR-171 DEL</scope>
</reference>
<reference key="12">
    <citation type="journal article" date="2002" name="Am. J. Hum. Genet.">
        <title>The gene mutated in variant late-infantile neuronal ceroid lipofuscinosis (CLN6) and in nclf mutant mice encodes a novel predicted transmembrane protein.</title>
        <authorList>
            <person name="Wheeler R.B."/>
            <person name="Sharp J.D."/>
            <person name="Schultz R.A."/>
            <person name="Joslin J.M."/>
            <person name="Williams R.E."/>
            <person name="Mole S.E."/>
        </authorList>
    </citation>
    <scope>VARIANTS CLN6 ASP-123 AND ILE-154 DEL</scope>
</reference>
<reference key="13">
    <citation type="journal article" date="2003" name="Hum. Mutat.">
        <title>Novel mutations in the CLN6 gene causing a variant late infantile neuronal ceroid lipofuscinosis.</title>
        <authorList>
            <person name="Teixeira C.A."/>
            <person name="Espinola J."/>
            <person name="Huo L."/>
            <person name="Kohlschutter J."/>
            <person name="Persaud Sawin D.A."/>
            <person name="Minassian B."/>
            <person name="Bessa C.J."/>
            <person name="Guimaraes A."/>
            <person name="Stephan D.A."/>
            <person name="Sa Miranda M.C."/>
            <person name="MacDonald M.E."/>
            <person name="Ribeiro M.G."/>
            <person name="Boustany R.-M.N."/>
        </authorList>
    </citation>
    <scope>VARIANT CLN6 ARG-300</scope>
</reference>
<reference key="14">
    <citation type="journal article" date="2003" name="Hum. Mutat.">
        <title>Spectrum of CLN6 mutations in variant late infantile neuronal ceroid lipofuscinosis.</title>
        <authorList>
            <person name="Sharp J.D."/>
            <person name="Wheeler R.B."/>
            <person name="Parker K.A."/>
            <person name="Gardiner R.M."/>
            <person name="Williams R.E."/>
            <person name="Mole S.E."/>
        </authorList>
    </citation>
    <scope>VARIANTS CLN6 HIS-62; SER-221; THR-241; SER-265 DEL AND LEU-299</scope>
    <scope>VARIANT GLN-72</scope>
</reference>
<reference key="15">
    <citation type="journal article" date="2009" name="Brain">
        <title>Mutations in CLN7/MFSD8 are a common cause of variant late-infantile neuronal ceroid lipofuscinosis.</title>
        <authorList>
            <person name="Kousi M."/>
            <person name="Siintola E."/>
            <person name="Dvorakova L."/>
            <person name="Vlaskova H."/>
            <person name="Turnbull J."/>
            <person name="Topcu M."/>
            <person name="Yuksel D."/>
            <person name="Gokben S."/>
            <person name="Minassian B.A."/>
            <person name="Elleder M."/>
            <person name="Mole S.E."/>
            <person name="Lehesjoki A.-E."/>
        </authorList>
    </citation>
    <scope>VARIANTS CLN6 LEU-159; CYS-221 AND SER-265 DEL</scope>
</reference>
<reference key="16">
    <citation type="journal article" date="2011" name="Am. J. Hum. Genet.">
        <title>Kufs disease, the major adult form of neuronal ceroid lipofuscinosis, caused by mutations in CLN6.</title>
        <authorList>
            <person name="Arsov T."/>
            <person name="Smith K.R."/>
            <person name="Damiano J."/>
            <person name="Franceschetti S."/>
            <person name="Canafoglia L."/>
            <person name="Bromhead C.J."/>
            <person name="Andermann E."/>
            <person name="Vears D.F."/>
            <person name="Cossette P."/>
            <person name="Rajagopalan S."/>
            <person name="McDougall A."/>
            <person name="Sofia V."/>
            <person name="Farrell M."/>
            <person name="Aguglia U."/>
            <person name="Zini A."/>
            <person name="Meletti S."/>
            <person name="Morbin M."/>
            <person name="Mullen S."/>
            <person name="Andermann F."/>
            <person name="Mole S.E."/>
            <person name="Bahlo M."/>
            <person name="Berkovic S.F."/>
        </authorList>
    </citation>
    <scope>VARIANTS CLN4A THR-6; PHE-47; PRO-67; LYS-77; GLN-103; HIS-149 AND THR-238</scope>
    <scope>VARIANTS THR-34 AND THR-308</scope>
</reference>
<reference key="17">
    <citation type="journal article" date="2012" name="Hum. Mutat.">
        <title>Update of the mutation spectrum and clinical correlations of over 360 mutations in eight genes that underlie the neuronal ceroid lipofuscinoses.</title>
        <authorList>
            <person name="Kousi M."/>
            <person name="Lehesjoki A.E."/>
            <person name="Mole S.E."/>
        </authorList>
    </citation>
    <scope>VARIANTS CLN6 SER-17; LYS-90; PHE-104; CYS-149; PRO-169; SER-186; LEU-234; HIS-252; SER-259 AND THR-297</scope>
    <scope>VARIANT THR-12</scope>
</reference>
<reference key="18">
    <citation type="journal article" date="2016" name="Nature">
        <title>Analysis of protein-coding genetic variation in 60,706 humans.</title>
        <authorList>
            <consortium name="Exome Aggregation Consortium"/>
            <person name="Lek M."/>
            <person name="Karczewski K.J."/>
            <person name="Minikel E.V."/>
            <person name="Samocha K.E."/>
            <person name="Banks E."/>
            <person name="Fennell T."/>
            <person name="O'Donnell-Luria A.H."/>
            <person name="Ware J.S."/>
            <person name="Hill A.J."/>
            <person name="Cummings B.B."/>
            <person name="Tukiainen T."/>
            <person name="Birnbaum D.P."/>
            <person name="Kosmicki J.A."/>
            <person name="Duncan L.E."/>
            <person name="Estrada K."/>
            <person name="Zhao F."/>
            <person name="Zou J."/>
            <person name="Pierce-Hoffman E."/>
            <person name="Berghout J."/>
            <person name="Cooper D.N."/>
            <person name="Deflaux N."/>
            <person name="DePristo M."/>
            <person name="Do R."/>
            <person name="Flannick J."/>
            <person name="Fromer M."/>
            <person name="Gauthier L."/>
            <person name="Goldstein J."/>
            <person name="Gupta N."/>
            <person name="Howrigan D."/>
            <person name="Kiezun A."/>
            <person name="Kurki M.I."/>
            <person name="Moonshine A.L."/>
            <person name="Natarajan P."/>
            <person name="Orozco L."/>
            <person name="Peloso G.M."/>
            <person name="Poplin R."/>
            <person name="Rivas M.A."/>
            <person name="Ruano-Rubio V."/>
            <person name="Rose S.A."/>
            <person name="Ruderfer D.M."/>
            <person name="Shakir K."/>
            <person name="Stenson P.D."/>
            <person name="Stevens C."/>
            <person name="Thomas B.P."/>
            <person name="Tiao G."/>
            <person name="Tusie-Luna M.T."/>
            <person name="Weisburd B."/>
            <person name="Won H.H."/>
            <person name="Yu D."/>
            <person name="Altshuler D.M."/>
            <person name="Ardissino D."/>
            <person name="Boehnke M."/>
            <person name="Danesh J."/>
            <person name="Donnelly S."/>
            <person name="Elosua R."/>
            <person name="Florez J.C."/>
            <person name="Gabriel S.B."/>
            <person name="Getz G."/>
            <person name="Glatt S.J."/>
            <person name="Hultman C.M."/>
            <person name="Kathiresan S."/>
            <person name="Laakso M."/>
            <person name="McCarroll S."/>
            <person name="McCarthy M.I."/>
            <person name="McGovern D."/>
            <person name="McPherson R."/>
            <person name="Neale B.M."/>
            <person name="Palotie A."/>
            <person name="Purcell S.M."/>
            <person name="Saleheen D."/>
            <person name="Scharf J.M."/>
            <person name="Sklar P."/>
            <person name="Sullivan P.F."/>
            <person name="Tuomilehto J."/>
            <person name="Tsuang M.T."/>
            <person name="Watkins H.C."/>
            <person name="Wilson J.G."/>
            <person name="Daly M.J."/>
            <person name="MacArthur D.G."/>
        </authorList>
    </citation>
    <scope>VARIANT GLN-72</scope>
</reference>
<protein>
    <recommendedName>
        <fullName>Ceroid-lipofuscinosis neuronal protein 6</fullName>
        <shortName>Protein CLN6</shortName>
    </recommendedName>
</protein>
<comment type="subunit">
    <text evidence="7 9 10">Interacts with CRMP2 (PubMed:19235893). Interacts with CLN5 (PubMed:19941651). Interacts with CLN3 (PubMed:17237713).</text>
</comment>
<comment type="interaction">
    <interactant intactId="EBI-6165897">
        <id>Q9NWW5</id>
    </interactant>
    <interactant intactId="EBI-11343438">
        <id>Q3SXY8</id>
        <label>ARL13B</label>
    </interactant>
    <organismsDiffer>false</organismsDiffer>
    <experiments>3</experiments>
</comment>
<comment type="interaction">
    <interactant intactId="EBI-6165897">
        <id>Q9NWW5</id>
    </interactant>
    <interactant intactId="EBI-7797864">
        <id>P11912</id>
        <label>CD79A</label>
    </interactant>
    <organismsDiffer>false</organismsDiffer>
    <experiments>3</experiments>
</comment>
<comment type="interaction">
    <interactant intactId="EBI-6165897">
        <id>Q9NWW5</id>
    </interactant>
    <interactant intactId="EBI-1045797">
        <id>Q8N5K1</id>
        <label>CISD2</label>
    </interactant>
    <organismsDiffer>false</organismsDiffer>
    <experiments>3</experiments>
</comment>
<comment type="interaction">
    <interactant intactId="EBI-6165897">
        <id>Q9NWW5</id>
    </interactant>
    <interactant intactId="EBI-740744">
        <id>O95471</id>
        <label>CLDN7</label>
    </interactant>
    <organismsDiffer>false</organismsDiffer>
    <experiments>3</experiments>
</comment>
<comment type="interaction">
    <interactant intactId="EBI-6165897">
        <id>Q9NWW5</id>
    </interactant>
    <interactant intactId="EBI-2873246">
        <id>Q8IUN9</id>
        <label>CLEC10A</label>
    </interactant>
    <organismsDiffer>false</organismsDiffer>
    <experiments>3</experiments>
</comment>
<comment type="interaction">
    <interactant intactId="EBI-6165897">
        <id>Q9NWW5</id>
    </interactant>
    <interactant intactId="EBI-18013275">
        <id>Q7Z7G2</id>
        <label>CPLX4</label>
    </interactant>
    <organismsDiffer>false</organismsDiffer>
    <experiments>3</experiments>
</comment>
<comment type="interaction">
    <interactant intactId="EBI-6165897">
        <id>Q9NWW5</id>
    </interactant>
    <interactant intactId="EBI-6942903">
        <id>Q96BA8</id>
        <label>CREB3L1</label>
    </interactant>
    <organismsDiffer>false</organismsDiffer>
    <experiments>5</experiments>
</comment>
<comment type="interaction">
    <interactant intactId="EBI-6165897">
        <id>Q9NWW5</id>
    </interactant>
    <interactant intactId="EBI-2680384">
        <id>Q9BQA9</id>
        <label>CYBC1</label>
    </interactant>
    <organismsDiffer>false</organismsDiffer>
    <experiments>3</experiments>
</comment>
<comment type="interaction">
    <interactant intactId="EBI-6165897">
        <id>Q9NWW5</id>
    </interactant>
    <interactant intactId="EBI-8787095">
        <id>O00559</id>
        <label>EBAG9</label>
    </interactant>
    <organismsDiffer>false</organismsDiffer>
    <experiments>3</experiments>
</comment>
<comment type="interaction">
    <interactant intactId="EBI-6165897">
        <id>Q9NWW5</id>
    </interactant>
    <interactant intactId="EBI-25838727">
        <id>P29323-3</id>
        <label>EPHB2</label>
    </interactant>
    <organismsDiffer>false</organismsDiffer>
    <experiments>3</experiments>
</comment>
<comment type="interaction">
    <interactant intactId="EBI-6165897">
        <id>Q9NWW5</id>
    </interactant>
    <interactant intactId="EBI-17640610">
        <id>P34910-2</id>
        <label>EVI2B</label>
    </interactant>
    <organismsDiffer>false</organismsDiffer>
    <experiments>3</experiments>
</comment>
<comment type="interaction">
    <interactant intactId="EBI-6165897">
        <id>Q9NWW5</id>
    </interactant>
    <interactant intactId="EBI-18304435">
        <id>Q5JX71</id>
        <label>FAM209A</label>
    </interactant>
    <organismsDiffer>false</organismsDiffer>
    <experiments>3</experiments>
</comment>
<comment type="interaction">
    <interactant intactId="EBI-6165897">
        <id>Q9NWW5</id>
    </interactant>
    <interactant intactId="EBI-12142257">
        <id>Q8TBE3</id>
        <label>FNDC9</label>
    </interactant>
    <organismsDiffer>false</organismsDiffer>
    <experiments>3</experiments>
</comment>
<comment type="interaction">
    <interactant intactId="EBI-6165897">
        <id>Q9NWW5</id>
    </interactant>
    <interactant intactId="EBI-17458373">
        <id>P48165</id>
        <label>GJA8</label>
    </interactant>
    <organismsDiffer>false</organismsDiffer>
    <experiments>3</experiments>
</comment>
<comment type="interaction">
    <interactant intactId="EBI-6165897">
        <id>Q9NWW5</id>
    </interactant>
    <interactant intactId="EBI-3917143">
        <id>Q5T7V8</id>
        <label>GORAB</label>
    </interactant>
    <organismsDiffer>false</organismsDiffer>
    <experiments>3</experiments>
</comment>
<comment type="interaction">
    <interactant intactId="EBI-6165897">
        <id>Q9NWW5</id>
    </interactant>
    <interactant intactId="EBI-8632435">
        <id>P43628</id>
        <label>KIR2DL3</label>
    </interactant>
    <organismsDiffer>false</organismsDiffer>
    <experiments>3</experiments>
</comment>
<comment type="interaction">
    <interactant intactId="EBI-6165897">
        <id>Q9NWW5</id>
    </interactant>
    <interactant intactId="EBI-2830566">
        <id>Q9H400</id>
        <label>LIME1</label>
    </interactant>
    <organismsDiffer>false</organismsDiffer>
    <experiments>3</experiments>
</comment>
<comment type="interaction">
    <interactant intactId="EBI-6165897">
        <id>Q9NWW5</id>
    </interactant>
    <interactant intactId="EBI-11304917">
        <id>Q8N386</id>
        <label>LRRC25</label>
    </interactant>
    <organismsDiffer>false</organismsDiffer>
    <experiments>3</experiments>
</comment>
<comment type="interaction">
    <interactant intactId="EBI-6165897">
        <id>Q9NWW5</id>
    </interactant>
    <interactant intactId="EBI-12375429">
        <id>Q7Z5B4-5</id>
        <label>RIC3</label>
    </interactant>
    <organismsDiffer>false</organismsDiffer>
    <experiments>3</experiments>
</comment>
<comment type="interaction">
    <interactant intactId="EBI-6165897">
        <id>Q9NWW5</id>
    </interactant>
    <interactant intactId="EBI-12081840">
        <id>A1A5C7-2</id>
        <label>SLC22A23</label>
    </interactant>
    <organismsDiffer>false</organismsDiffer>
    <experiments>3</experiments>
</comment>
<comment type="interaction">
    <interactant intactId="EBI-6165897">
        <id>Q9NWW5</id>
    </interactant>
    <interactant intactId="EBI-13918058">
        <id>O14863</id>
        <label>SLC30A4</label>
    </interactant>
    <organismsDiffer>false</organismsDiffer>
    <experiments>3</experiments>
</comment>
<comment type="interaction">
    <interactant intactId="EBI-6165897">
        <id>Q9NWW5</id>
    </interactant>
    <interactant intactId="EBI-712466">
        <id>Q16623</id>
        <label>STX1A</label>
    </interactant>
    <organismsDiffer>false</organismsDiffer>
    <experiments>3</experiments>
</comment>
<comment type="interaction">
    <interactant intactId="EBI-6165897">
        <id>Q9NWW5</id>
    </interactant>
    <interactant intactId="EBI-10329860">
        <id>Q9Y6I9</id>
        <label>TEX264</label>
    </interactant>
    <organismsDiffer>false</organismsDiffer>
    <experiments>3</experiments>
</comment>
<comment type="interaction">
    <interactant intactId="EBI-6165897">
        <id>Q9NWW5</id>
    </interactant>
    <interactant intactId="EBI-7238458">
        <id>Q8IV31</id>
        <label>TMEM139</label>
    </interactant>
    <organismsDiffer>false</organismsDiffer>
    <experiments>3</experiments>
</comment>
<comment type="interaction">
    <interactant intactId="EBI-6165897">
        <id>Q9NWW5</id>
    </interactant>
    <interactant intactId="EBI-10982110">
        <id>Q96Q45-2</id>
        <label>TMEM237</label>
    </interactant>
    <organismsDiffer>false</organismsDiffer>
    <experiments>3</experiments>
</comment>
<comment type="interaction">
    <interactant intactId="EBI-6165897">
        <id>Q9NWW5</id>
    </interactant>
    <interactant intactId="EBI-12345267">
        <id>O15393-2</id>
        <label>TMPRSS2</label>
    </interactant>
    <organismsDiffer>false</organismsDiffer>
    <experiments>3</experiments>
</comment>
<comment type="interaction">
    <interactant intactId="EBI-6165897">
        <id>Q9NWW5</id>
    </interactant>
    <interactant intactId="EBI-743923">
        <id>O00308</id>
        <label>WWP2</label>
    </interactant>
    <organismsDiffer>false</organismsDiffer>
    <experiments>3</experiments>
</comment>
<comment type="interaction">
    <interactant intactId="EBI-6165897">
        <id>Q9NWW5</id>
    </interactant>
    <interactant intactId="EBI-20625235">
        <id>A0A142I5B9</id>
    </interactant>
    <organismsDiffer>true</organismsDiffer>
    <experiments>4</experiments>
</comment>
<comment type="subcellular location">
    <subcellularLocation>
        <location evidence="6">Endoplasmic reticulum membrane</location>
        <topology evidence="6">Multi-pass membrane protein</topology>
    </subcellularLocation>
    <subcellularLocation>
        <location evidence="10">Endoplasmic reticulum</location>
    </subcellularLocation>
</comment>
<comment type="alternative products">
    <event type="alternative splicing"/>
    <isoform>
        <id>Q9NWW5-1</id>
        <name>1</name>
        <sequence type="displayed"/>
    </isoform>
    <isoform>
        <id>Q9NWW5-2</id>
        <name>2</name>
        <sequence type="described" ref="VSP_056197"/>
    </isoform>
</comment>
<comment type="disease" evidence="2 3 4 5 8 11 13 15">
    <disease id="DI-00814">
        <name>Ceroid lipofuscinosis, neuronal, 6</name>
        <acronym>CLN6</acronym>
        <description>An autosomal recessive form of neuronal ceroid lipofuscinosis. Neuronal ceroid lipofuscinoses are progressive neurodegenerative, lysosomal storage diseases characterized by intracellular accumulation of autofluorescent liposomal material, and clinically by seizures, dementia, visual loss, and/or cerebral atrophy. The lipopigment patterns observed most often in neuronal ceroid lipofuscinosis type 6 comprise mixed combinations of granular, curvilinear, and fingerprint profiles.</description>
        <dbReference type="MIM" id="601780"/>
    </disease>
    <text>The disease is caused by variants affecting the gene represented in this entry.</text>
</comment>
<comment type="disease" evidence="12">
    <disease id="DI-03163">
        <name>Ceroid lipofuscinosis, neuronal, 4A (Kufs type), autosomal recessive</name>
        <acronym>CLN4A</acronym>
        <description>An adult-onset neuronal ceroid lipofuscinosis. Neuronal ceroid lipofuscinoses are progressive neurodegenerative, lysosomal storage diseases characterized by intracellular accumulation of autofluorescent liposomal material, and clinically by seizures, dementia, visual loss, and/or cerebral atrophy. CLN4A has no visual involvement and is characterized by progressive myoclonic epilepsy.</description>
        <dbReference type="MIM" id="204300"/>
    </disease>
    <text>The disease is caused by variants affecting the gene represented in this entry.</text>
</comment>
<comment type="online information" name="NCL CLN6">
    <link uri="https://www.ucl.ac.uk/ncl-disease/ncl-resource-gateway-batten-disease"/>
    <text>Neural Ceroid Lipofuscinoses mutation db</text>
</comment>
<dbReference type="EMBL" id="AK000568">
    <property type="protein sequence ID" value="BAA91260.1"/>
    <property type="molecule type" value="mRNA"/>
</dbReference>
<dbReference type="EMBL" id="AK027604">
    <property type="protein sequence ID" value="BAB55226.1"/>
    <property type="molecule type" value="mRNA"/>
</dbReference>
<dbReference type="EMBL" id="AK291175">
    <property type="protein sequence ID" value="BAF83864.1"/>
    <property type="molecule type" value="mRNA"/>
</dbReference>
<dbReference type="EMBL" id="AK293197">
    <property type="protein sequence ID" value="BAG56737.1"/>
    <property type="molecule type" value="mRNA"/>
</dbReference>
<dbReference type="EMBL" id="CR457244">
    <property type="protein sequence ID" value="CAG33525.1"/>
    <property type="molecule type" value="mRNA"/>
</dbReference>
<dbReference type="EMBL" id="AC107871">
    <property type="status" value="NOT_ANNOTATED_CDS"/>
    <property type="molecule type" value="Genomic_DNA"/>
</dbReference>
<dbReference type="EMBL" id="CH471082">
    <property type="protein sequence ID" value="EAW77811.1"/>
    <property type="molecule type" value="Genomic_DNA"/>
</dbReference>
<dbReference type="EMBL" id="BC010849">
    <property type="protein sequence ID" value="AAH10849.1"/>
    <property type="molecule type" value="mRNA"/>
</dbReference>
<dbReference type="EMBL" id="BC013130">
    <property type="protein sequence ID" value="AAH13130.1"/>
    <property type="molecule type" value="mRNA"/>
</dbReference>
<dbReference type="CCDS" id="CCDS10227.1">
    <molecule id="Q9NWW5-1"/>
</dbReference>
<dbReference type="CCDS" id="CCDS92032.1">
    <molecule id="Q9NWW5-2"/>
</dbReference>
<dbReference type="RefSeq" id="NP_001397997.1">
    <molecule id="Q9NWW5-2"/>
    <property type="nucleotide sequence ID" value="NM_001411068.1"/>
</dbReference>
<dbReference type="RefSeq" id="NP_060352.1">
    <molecule id="Q9NWW5-1"/>
    <property type="nucleotide sequence ID" value="NM_017882.3"/>
</dbReference>
<dbReference type="BioGRID" id="120318">
    <property type="interactions" value="129"/>
</dbReference>
<dbReference type="FunCoup" id="Q9NWW5">
    <property type="interactions" value="1010"/>
</dbReference>
<dbReference type="IntAct" id="Q9NWW5">
    <property type="interactions" value="90"/>
</dbReference>
<dbReference type="STRING" id="9606.ENSP00000249806"/>
<dbReference type="TCDB" id="9.B.386.1.1">
    <property type="family name" value="the ceroid-lipofuscinosis neuronal protein-6 (cln6) family"/>
</dbReference>
<dbReference type="iPTMnet" id="Q9NWW5"/>
<dbReference type="PhosphoSitePlus" id="Q9NWW5"/>
<dbReference type="SwissPalm" id="Q9NWW5"/>
<dbReference type="BioMuta" id="CLN6"/>
<dbReference type="DMDM" id="32129457"/>
<dbReference type="jPOST" id="Q9NWW5"/>
<dbReference type="MassIVE" id="Q9NWW5"/>
<dbReference type="PaxDb" id="9606-ENSP00000249806"/>
<dbReference type="PeptideAtlas" id="Q9NWW5"/>
<dbReference type="ProteomicsDB" id="3862"/>
<dbReference type="ProteomicsDB" id="82991">
    <molecule id="Q9NWW5-1"/>
</dbReference>
<dbReference type="Pumba" id="Q9NWW5"/>
<dbReference type="Antibodypedia" id="26301">
    <property type="antibodies" value="179 antibodies from 30 providers"/>
</dbReference>
<dbReference type="DNASU" id="54982"/>
<dbReference type="Ensembl" id="ENST00000249806.11">
    <molecule id="Q9NWW5-1"/>
    <property type="protein sequence ID" value="ENSP00000249806.5"/>
    <property type="gene ID" value="ENSG00000128973.13"/>
</dbReference>
<dbReference type="Ensembl" id="ENST00000538696.5">
    <molecule id="Q9NWW5-2"/>
    <property type="protein sequence ID" value="ENSP00000445770.1"/>
    <property type="gene ID" value="ENSG00000128973.13"/>
</dbReference>
<dbReference type="GeneID" id="54982"/>
<dbReference type="KEGG" id="hsa:54982"/>
<dbReference type="MANE-Select" id="ENST00000249806.11">
    <property type="protein sequence ID" value="ENSP00000249806.5"/>
    <property type="RefSeq nucleotide sequence ID" value="NM_017882.3"/>
    <property type="RefSeq protein sequence ID" value="NP_060352.1"/>
</dbReference>
<dbReference type="UCSC" id="uc002arf.3">
    <molecule id="Q9NWW5-1"/>
    <property type="organism name" value="human"/>
</dbReference>
<dbReference type="AGR" id="HGNC:2077"/>
<dbReference type="CTD" id="54982"/>
<dbReference type="DisGeNET" id="54982"/>
<dbReference type="GeneCards" id="CLN6"/>
<dbReference type="HGNC" id="HGNC:2077">
    <property type="gene designation" value="CLN6"/>
</dbReference>
<dbReference type="HPA" id="ENSG00000128973">
    <property type="expression patterns" value="Low tissue specificity"/>
</dbReference>
<dbReference type="MalaCards" id="CLN6"/>
<dbReference type="MIM" id="204300">
    <property type="type" value="phenotype"/>
</dbReference>
<dbReference type="MIM" id="601780">
    <property type="type" value="phenotype"/>
</dbReference>
<dbReference type="MIM" id="606725">
    <property type="type" value="gene"/>
</dbReference>
<dbReference type="neXtProt" id="NX_Q9NWW5"/>
<dbReference type="OpenTargets" id="ENSG00000128973"/>
<dbReference type="Orphanet" id="228363">
    <property type="disease" value="CLN6 disease"/>
</dbReference>
<dbReference type="PharmGKB" id="PA26604"/>
<dbReference type="VEuPathDB" id="HostDB:ENSG00000128973"/>
<dbReference type="eggNOG" id="ENOG502QSUV">
    <property type="taxonomic scope" value="Eukaryota"/>
</dbReference>
<dbReference type="GeneTree" id="ENSGT00400000022240"/>
<dbReference type="HOGENOM" id="CLU_077437_0_0_1"/>
<dbReference type="InParanoid" id="Q9NWW5"/>
<dbReference type="OMA" id="VFPLQWF"/>
<dbReference type="OrthoDB" id="9970199at2759"/>
<dbReference type="PAN-GO" id="Q9NWW5">
    <property type="GO annotations" value="3 GO annotations based on evolutionary models"/>
</dbReference>
<dbReference type="PhylomeDB" id="Q9NWW5"/>
<dbReference type="TreeFam" id="TF333294"/>
<dbReference type="PathwayCommons" id="Q9NWW5"/>
<dbReference type="SignaLink" id="Q9NWW5"/>
<dbReference type="BioGRID-ORCS" id="54982">
    <property type="hits" value="11 hits in 1158 CRISPR screens"/>
</dbReference>
<dbReference type="ChiTaRS" id="CLN6">
    <property type="organism name" value="human"/>
</dbReference>
<dbReference type="GeneWiki" id="CLN6"/>
<dbReference type="GenomeRNAi" id="54982"/>
<dbReference type="Pharos" id="Q9NWW5">
    <property type="development level" value="Tbio"/>
</dbReference>
<dbReference type="PRO" id="PR:Q9NWW5"/>
<dbReference type="Proteomes" id="UP000005640">
    <property type="component" value="Chromosome 15"/>
</dbReference>
<dbReference type="RNAct" id="Q9NWW5">
    <property type="molecule type" value="protein"/>
</dbReference>
<dbReference type="Bgee" id="ENSG00000128973">
    <property type="expression patterns" value="Expressed in monocyte and 100 other cell types or tissues"/>
</dbReference>
<dbReference type="ExpressionAtlas" id="Q9NWW5">
    <property type="expression patterns" value="baseline and differential"/>
</dbReference>
<dbReference type="GO" id="GO:0005769">
    <property type="term" value="C:early endosome"/>
    <property type="evidence" value="ECO:0000314"/>
    <property type="project" value="UniProtKB"/>
</dbReference>
<dbReference type="GO" id="GO:0005783">
    <property type="term" value="C:endoplasmic reticulum"/>
    <property type="evidence" value="ECO:0000314"/>
    <property type="project" value="HPA"/>
</dbReference>
<dbReference type="GO" id="GO:0005788">
    <property type="term" value="C:endoplasmic reticulum lumen"/>
    <property type="evidence" value="ECO:0000314"/>
    <property type="project" value="UniProtKB"/>
</dbReference>
<dbReference type="GO" id="GO:0005789">
    <property type="term" value="C:endoplasmic reticulum membrane"/>
    <property type="evidence" value="ECO:0007669"/>
    <property type="project" value="UniProtKB-SubCell"/>
</dbReference>
<dbReference type="GO" id="GO:0043231">
    <property type="term" value="C:intracellular membrane-bounded organelle"/>
    <property type="evidence" value="ECO:0000314"/>
    <property type="project" value="HPA"/>
</dbReference>
<dbReference type="GO" id="GO:0016020">
    <property type="term" value="C:membrane"/>
    <property type="evidence" value="ECO:0007005"/>
    <property type="project" value="UniProtKB"/>
</dbReference>
<dbReference type="GO" id="GO:0045121">
    <property type="term" value="C:membrane raft"/>
    <property type="evidence" value="ECO:0000314"/>
    <property type="project" value="UniProtKB"/>
</dbReference>
<dbReference type="GO" id="GO:0005730">
    <property type="term" value="C:nucleolus"/>
    <property type="evidence" value="ECO:0000314"/>
    <property type="project" value="HPA"/>
</dbReference>
<dbReference type="GO" id="GO:0035727">
    <property type="term" value="F:lysophosphatidic acid binding"/>
    <property type="evidence" value="ECO:0000314"/>
    <property type="project" value="UniProtKB"/>
</dbReference>
<dbReference type="GO" id="GO:0042803">
    <property type="term" value="F:protein homodimerization activity"/>
    <property type="evidence" value="ECO:0000314"/>
    <property type="project" value="UniProtKB"/>
</dbReference>
<dbReference type="GO" id="GO:0120146">
    <property type="term" value="F:sulfatide binding"/>
    <property type="evidence" value="ECO:0000314"/>
    <property type="project" value="UniProtKB"/>
</dbReference>
<dbReference type="GO" id="GO:0008203">
    <property type="term" value="P:cholesterol metabolic process"/>
    <property type="evidence" value="ECO:0000315"/>
    <property type="project" value="UniProtKB"/>
</dbReference>
<dbReference type="GO" id="GO:0001573">
    <property type="term" value="P:ganglioside metabolic process"/>
    <property type="evidence" value="ECO:0000315"/>
    <property type="project" value="UniProtKB"/>
</dbReference>
<dbReference type="GO" id="GO:0030203">
    <property type="term" value="P:glycosaminoglycan metabolic process"/>
    <property type="evidence" value="ECO:0000315"/>
    <property type="project" value="UniProtKB"/>
</dbReference>
<dbReference type="GO" id="GO:0031987">
    <property type="term" value="P:locomotion involved in locomotory behavior"/>
    <property type="evidence" value="ECO:0007669"/>
    <property type="project" value="Ensembl"/>
</dbReference>
<dbReference type="GO" id="GO:0007042">
    <property type="term" value="P:lysosomal lumen acidification"/>
    <property type="evidence" value="ECO:0000315"/>
    <property type="project" value="UniProtKB"/>
</dbReference>
<dbReference type="GO" id="GO:0007040">
    <property type="term" value="P:lysosome organization"/>
    <property type="evidence" value="ECO:0000318"/>
    <property type="project" value="GO_Central"/>
</dbReference>
<dbReference type="GO" id="GO:0045862">
    <property type="term" value="P:positive regulation of proteolysis"/>
    <property type="evidence" value="ECO:0000315"/>
    <property type="project" value="UniProtKB"/>
</dbReference>
<dbReference type="GO" id="GO:0030163">
    <property type="term" value="P:protein catabolic process"/>
    <property type="evidence" value="ECO:0000303"/>
    <property type="project" value="UniProtKB"/>
</dbReference>
<dbReference type="GO" id="GO:0007601">
    <property type="term" value="P:visual perception"/>
    <property type="evidence" value="ECO:0007669"/>
    <property type="project" value="Ensembl"/>
</dbReference>
<dbReference type="InterPro" id="IPR029255">
    <property type="entry name" value="CLN6"/>
</dbReference>
<dbReference type="PANTHER" id="PTHR16244">
    <property type="entry name" value="CEROID-LIPOFUSCINOSIS NEURONAL PROTEIN 6"/>
    <property type="match status" value="1"/>
</dbReference>
<dbReference type="PANTHER" id="PTHR16244:SF2">
    <property type="entry name" value="CEROID-LIPOFUSCINOSIS NEURONAL PROTEIN 6"/>
    <property type="match status" value="1"/>
</dbReference>
<dbReference type="Pfam" id="PF15156">
    <property type="entry name" value="CLN6"/>
    <property type="match status" value="1"/>
</dbReference>
<gene>
    <name type="primary">CLN6</name>
</gene>
<sequence length="311" mass="35919">MEATRRRQHLGATGGPGAQLGASFLQARHGSVSADEAARTAPFHLDLWFYFTLQNWVLDFGRPIAMLVFPLEWFPLNKPSVGDYFHMAYNVITPFLLLKLIERSPRTLPRSITYVSIIIFIMGASIHLVGDSVNHRLLFSGYQHHLSVRENPIIKNLKPETLIDSFELLYYYDEYLGHCMWYIPFFLILFMYFSGCFTASKAESLIPGPALLLVAPSGLYYWYLVTEGQIFILFIFTFFAMLALVLHQKRKRLFLDSNGLFLFSSFALTLLLVALWVAWLWNDPVLRKKYPGVIYVPEPWAFYTLHVSSRH</sequence>
<accession>Q9NWW5</accession>
<accession>A8K560</accession>
<accession>B4DDH6</accession>
<accession>Q6IAB1</accession>
<accession>Q96SR0</accession>
<feature type="chain" id="PRO_0000089862" description="Ceroid-lipofuscinosis neuronal protein 6">
    <location>
        <begin position="1"/>
        <end position="311"/>
    </location>
</feature>
<feature type="transmembrane region" description="Helical" evidence="1">
    <location>
        <begin position="56"/>
        <end position="76"/>
    </location>
</feature>
<feature type="transmembrane region" description="Helical" evidence="1">
    <location>
        <begin position="81"/>
        <end position="101"/>
    </location>
</feature>
<feature type="transmembrane region" description="Helical" evidence="1">
    <location>
        <begin position="111"/>
        <end position="131"/>
    </location>
</feature>
<feature type="transmembrane region" description="Helical" evidence="1">
    <location>
        <begin position="179"/>
        <end position="199"/>
    </location>
</feature>
<feature type="transmembrane region" description="Helical" evidence="1">
    <location>
        <begin position="204"/>
        <end position="224"/>
    </location>
</feature>
<feature type="transmembrane region" description="Helical" evidence="1">
    <location>
        <begin position="225"/>
        <end position="245"/>
    </location>
</feature>
<feature type="transmembrane region" description="Helical" evidence="1">
    <location>
        <begin position="260"/>
        <end position="280"/>
    </location>
</feature>
<feature type="splice variant" id="VSP_056197" description="In isoform 2." evidence="16">
    <original>MEATRRRQHLGATGGPGAQLGASFLQAR</original>
    <variation>MAAVAGKERRARGRPRPETLGAIPRREGGEAGLSRAFKPLAQAPLSCETSLRKLKFKGKK</variation>
    <location>
        <begin position="1"/>
        <end position="28"/>
    </location>
</feature>
<feature type="sequence variant" id="VAR_065834" description="In CLN4A; dbSNP:rs154774636." evidence="12">
    <original>R</original>
    <variation>T</variation>
    <location>
        <position position="6"/>
    </location>
</feature>
<feature type="sequence variant" id="VAR_066904" description="In dbSNP:rs112239768." evidence="13">
    <original>A</original>
    <variation>T</variation>
    <location>
        <position position="12"/>
    </location>
</feature>
<feature type="sequence variant" id="VAR_066905" description="In CLN6; uncertain significance; dbSNP:rs763944821." evidence="13">
    <original>G</original>
    <variation>S</variation>
    <location>
        <position position="17"/>
    </location>
</feature>
<feature type="sequence variant" id="VAR_065835" description="In dbSNP:rs146198681." evidence="12">
    <original>A</original>
    <variation>T</variation>
    <location>
        <position position="34"/>
    </location>
</feature>
<feature type="sequence variant" id="VAR_065836" description="In CLN4A; dbSNP:rs154774635." evidence="12">
    <original>L</original>
    <variation>F</variation>
    <location>
        <position position="47"/>
    </location>
</feature>
<feature type="sequence variant" id="VAR_021549" description="In CLN6; dbSNP:rs751486476." evidence="5">
    <original>R</original>
    <variation>H</variation>
    <location>
        <position position="62"/>
    </location>
</feature>
<feature type="sequence variant" id="VAR_065837" description="In CLN4A; dbSNP:rs154774633." evidence="12">
    <original>L</original>
    <variation>P</variation>
    <location>
        <position position="67"/>
    </location>
</feature>
<feature type="sequence variant" id="VAR_021550" description="In dbSNP:rs104894483." evidence="5 14">
    <original>E</original>
    <variation>Q</variation>
    <location>
        <position position="72"/>
    </location>
</feature>
<feature type="sequence variant" id="VAR_065838" description="In CLN4A; dbSNP:rs154774641." evidence="12">
    <original>N</original>
    <variation>K</variation>
    <location>
        <position position="77"/>
    </location>
</feature>
<feature type="sequence variant" id="VAR_066906" description="In CLN6." evidence="13">
    <original>N</original>
    <variation>K</variation>
    <location>
        <position position="90"/>
    </location>
</feature>
<feature type="sequence variant" id="VAR_065839" description="In CLN4A; dbSNP:rs154774634." evidence="12">
    <original>R</original>
    <variation>Q</variation>
    <location>
        <position position="103"/>
    </location>
</feature>
<feature type="sequence variant" id="VAR_066907" description="In CLN6; dbSNP:rs777921628." evidence="13">
    <original>S</original>
    <variation>F</variation>
    <location>
        <position position="104"/>
    </location>
</feature>
<feature type="sequence variant" id="VAR_015683" description="In CLN6; dbSNP:rs104894484." evidence="2">
    <original>G</original>
    <variation>D</variation>
    <location>
        <position position="123"/>
    </location>
</feature>
<feature type="sequence variant" id="VAR_066908" description="In CLN6; dbSNP:rs747229909." evidence="13">
    <original>R</original>
    <variation>C</variation>
    <location>
        <position position="149"/>
    </location>
</feature>
<feature type="sequence variant" id="VAR_065840" description="In CLN4A; dbSNP:rs154774638." evidence="12">
    <original>R</original>
    <variation>H</variation>
    <location>
        <position position="149"/>
    </location>
</feature>
<feature type="sequence variant" id="VAR_015684" description="In CLN6." evidence="2">
    <location>
        <position position="154"/>
    </location>
</feature>
<feature type="sequence variant" id="VAR_058436" description="In CLN6; dbSNP:rs919850756." evidence="8">
    <original>P</original>
    <variation>L</variation>
    <location>
        <position position="159"/>
    </location>
</feature>
<feature type="sequence variant" id="VAR_066909" description="In CLN6; dbSNP:rs1344658850." evidence="13">
    <original>L</original>
    <variation>P</variation>
    <location>
        <position position="169"/>
    </location>
</feature>
<feature type="sequence variant" id="VAR_015685" description="In CLN6; dbSNP:rs121908079." evidence="3">
    <location>
        <position position="171"/>
    </location>
</feature>
<feature type="sequence variant" id="VAR_066910" description="In CLN6." evidence="13">
    <original>F</original>
    <variation>S</variation>
    <location>
        <position position="186"/>
    </location>
</feature>
<feature type="sequence variant" id="VAR_058437" description="In CLN6; dbSNP:rs764571295." evidence="8">
    <original>Y</original>
    <variation>C</variation>
    <location>
        <position position="221"/>
    </location>
</feature>
<feature type="sequence variant" id="VAR_021551" description="In CLN6; dbSNP:rs764571295." evidence="5">
    <original>Y</original>
    <variation>S</variation>
    <location>
        <position position="221"/>
    </location>
</feature>
<feature type="sequence variant" id="VAR_066911" description="In CLN6; dbSNP:rs959199004." evidence="13 15">
    <original>F</original>
    <variation>L</variation>
    <location>
        <position position="234"/>
    </location>
</feature>
<feature type="sequence variant" id="VAR_065841" description="In CLN4A; requires 2 nucleotide substitutions; dbSNP:rs2141136108." evidence="12">
    <original>F</original>
    <variation>T</variation>
    <location>
        <position position="238"/>
    </location>
</feature>
<feature type="sequence variant" id="VAR_021552" description="In CLN6; decreased protein level, resulting from ER membrane-to-cytosol dislocation of the protein followed by proteasome degradation.; dbSNP:rs1555438255." evidence="5 11">
    <original>M</original>
    <variation>T</variation>
    <location>
        <position position="241"/>
    </location>
</feature>
<feature type="sequence variant" id="VAR_066912" description="In CLN6; dbSNP:rs374681194." evidence="13">
    <original>R</original>
    <variation>H</variation>
    <location>
        <position position="252"/>
    </location>
</feature>
<feature type="sequence variant" id="VAR_066913" description="In CLN6; dbSNP:rs150363441." evidence="13">
    <original>G</original>
    <variation>S</variation>
    <location>
        <position position="259"/>
    </location>
</feature>
<feature type="sequence variant" id="VAR_021553" description="In CLN6." evidence="5 8">
    <location>
        <position position="265"/>
    </location>
</feature>
<feature type="sequence variant" id="VAR_066914" description="In CLN6; dbSNP:rs1194940137." evidence="13">
    <original>P</original>
    <variation>T</variation>
    <location>
        <position position="297"/>
    </location>
</feature>
<feature type="sequence variant" id="VAR_021554" description="In CLN6; dbSNP:rs758921701." evidence="5">
    <original>P</original>
    <variation>L</variation>
    <location>
        <position position="299"/>
    </location>
</feature>
<feature type="sequence variant" id="VAR_015686" description="In CLN6; dbSNP:rs750937323." evidence="4">
    <original>W</original>
    <variation>R</variation>
    <location>
        <position position="300"/>
    </location>
</feature>
<feature type="sequence variant" id="VAR_065842" description="In dbSNP:rs143578698." evidence="12">
    <original>S</original>
    <variation>T</variation>
    <location>
        <position position="308"/>
    </location>
</feature>
<feature type="sequence conflict" description="In Ref. 1; BAB55226." evidence="17" ref="1">
    <original>W</original>
    <variation>R</variation>
    <location>
        <position position="281"/>
    </location>
</feature>
<organism>
    <name type="scientific">Homo sapiens</name>
    <name type="common">Human</name>
    <dbReference type="NCBI Taxonomy" id="9606"/>
    <lineage>
        <taxon>Eukaryota</taxon>
        <taxon>Metazoa</taxon>
        <taxon>Chordata</taxon>
        <taxon>Craniata</taxon>
        <taxon>Vertebrata</taxon>
        <taxon>Euteleostomi</taxon>
        <taxon>Mammalia</taxon>
        <taxon>Eutheria</taxon>
        <taxon>Euarchontoglires</taxon>
        <taxon>Primates</taxon>
        <taxon>Haplorrhini</taxon>
        <taxon>Catarrhini</taxon>
        <taxon>Hominidae</taxon>
        <taxon>Homo</taxon>
    </lineage>
</organism>
<name>CLN6_HUMAN</name>
<proteinExistence type="evidence at protein level"/>
<keyword id="KW-0025">Alternative splicing</keyword>
<keyword id="KW-0225">Disease variant</keyword>
<keyword id="KW-0256">Endoplasmic reticulum</keyword>
<keyword id="KW-0472">Membrane</keyword>
<keyword id="KW-0523">Neurodegeneration</keyword>
<keyword id="KW-0525">Neuronal ceroid lipofuscinosis</keyword>
<keyword id="KW-1267">Proteomics identification</keyword>
<keyword id="KW-1185">Reference proteome</keyword>
<keyword id="KW-0812">Transmembrane</keyword>
<keyword id="KW-1133">Transmembrane helix</keyword>